<feature type="chain" id="PRO_0000455983" description="Gasdermin-like protein het-Q1">
    <location>
        <begin position="1"/>
        <end position="278"/>
    </location>
</feature>
<feature type="chain" id="PRO_0000455984" description="Gasdermin-like protein het-Q1, N-terminal" evidence="4">
    <location>
        <begin position="1"/>
        <end position="237"/>
    </location>
</feature>
<feature type="site" description="Cleavage; by het-Q2" evidence="2">
    <location>
        <begin position="237"/>
        <end position="238"/>
    </location>
</feature>
<feature type="mutagenesis site" description="Does not affect ability to trigger cell death during the allorecognition process." evidence="2">
    <original>G</original>
    <variation>A</variation>
    <location>
        <position position="234"/>
    </location>
</feature>
<feature type="mutagenesis site" description="Does not affect ability to trigger cell death during the allorecognition process." evidence="2">
    <original>K</original>
    <variation>A</variation>
    <location>
        <position position="235"/>
    </location>
</feature>
<feature type="mutagenesis site" description="Does not affect ability to trigger cell death during the allorecognition process." evidence="2">
    <original>V</original>
    <variation>A</variation>
    <location>
        <position position="236"/>
    </location>
</feature>
<feature type="mutagenesis site" description="Abolished cleavage by het-Q2 and ability to trigger cell death during the allorecognition process." evidence="2">
    <original>L</original>
    <variation>A</variation>
    <location>
        <position position="237"/>
    </location>
</feature>
<feature type="mutagenesis site" description="Abolished cleavage by het-Q2 and ability to trigger cell death during the allorecognition process." evidence="2">
    <original>F</original>
    <variation>A</variation>
    <location>
        <position position="238"/>
    </location>
</feature>
<feature type="mutagenesis site" description="Does not affect ability to trigger cell death during the allorecognition process." evidence="2">
    <original>G</original>
    <variation>A</variation>
    <location>
        <position position="240"/>
    </location>
</feature>
<feature type="mutagenesis site" description="Does not affect ability to trigger cell death during the allorecognition process." evidence="2">
    <original>G</original>
    <variation>A</variation>
    <location>
        <position position="241"/>
    </location>
</feature>
<reference key="1">
    <citation type="journal article" date="2008" name="Genome Biol.">
        <title>The genome sequence of the model ascomycete fungus Podospora anserina.</title>
        <authorList>
            <person name="Espagne E."/>
            <person name="Lespinet O."/>
            <person name="Malagnac F."/>
            <person name="Da Silva C."/>
            <person name="Jaillon O."/>
            <person name="Porcel B.M."/>
            <person name="Couloux A."/>
            <person name="Aury J.-M."/>
            <person name="Segurens B."/>
            <person name="Poulain J."/>
            <person name="Anthouard V."/>
            <person name="Grossetete S."/>
            <person name="Khalili H."/>
            <person name="Coppin E."/>
            <person name="Dequard-Chablat M."/>
            <person name="Picard M."/>
            <person name="Contamine V."/>
            <person name="Arnaise S."/>
            <person name="Bourdais A."/>
            <person name="Berteaux-Lecellier V."/>
            <person name="Gautheret D."/>
            <person name="de Vries R.P."/>
            <person name="Battaglia E."/>
            <person name="Coutinho P.M."/>
            <person name="Danchin E.G.J."/>
            <person name="Henrissat B."/>
            <person name="El Khoury R."/>
            <person name="Sainsard-Chanet A."/>
            <person name="Boivin A."/>
            <person name="Pinan-Lucarre B."/>
            <person name="Sellem C.H."/>
            <person name="Debuchy R."/>
            <person name="Wincker P."/>
            <person name="Weissenbach J."/>
            <person name="Silar P."/>
        </authorList>
    </citation>
    <scope>NUCLEOTIDE SEQUENCE [LARGE SCALE GENOMIC DNA]</scope>
    <source>
        <strain>S / ATCC MYA-4624 / DSM 980 / FGSC 10383</strain>
    </source>
</reference>
<reference key="2">
    <citation type="journal article" date="2014" name="Genetics">
        <title>Maintaining two mating types: Structure of the mating type locus and its role in heterokaryosis in Podospora anserina.</title>
        <authorList>
            <person name="Grognet P."/>
            <person name="Bidard F."/>
            <person name="Kuchly C."/>
            <person name="Tong L.C.H."/>
            <person name="Coppin E."/>
            <person name="Benkhali J.A."/>
            <person name="Couloux A."/>
            <person name="Wincker P."/>
            <person name="Debuchy R."/>
            <person name="Silar P."/>
        </authorList>
    </citation>
    <scope>GENOME REANNOTATION</scope>
    <source>
        <strain>S / ATCC MYA-4624 / DSM 980 / FGSC 10383</strain>
    </source>
</reference>
<reference key="3">
    <citation type="journal article" date="2022" name="Proc. Natl. Acad. Sci. U.S.A.">
        <title>Fungal gasdermin-like proteins are controlled by proteolytic cleavage.</title>
        <authorList>
            <person name="Clave C."/>
            <person name="Dyrka W."/>
            <person name="Turcotte E.A."/>
            <person name="Granger-Farbos A."/>
            <person name="Ibarlosa L."/>
            <person name="Pinson B."/>
            <person name="Vance R.E."/>
            <person name="Saupe S.J."/>
            <person name="Daskalov A."/>
        </authorList>
    </citation>
    <scope>FUNCTION</scope>
    <scope>PROTEOLYTIC CLEAVAGE</scope>
    <scope>MUTAGENESIS OF GLY-234; LYS-235; VAL-236; LEU-237; PHE-238; GLY-240 AND GLY-241</scope>
</reference>
<organism>
    <name type="scientific">Podospora anserina (strain S / ATCC MYA-4624 / DSM 980 / FGSC 10383)</name>
    <name type="common">Pleurage anserina</name>
    <dbReference type="NCBI Taxonomy" id="515849"/>
    <lineage>
        <taxon>Eukaryota</taxon>
        <taxon>Fungi</taxon>
        <taxon>Dikarya</taxon>
        <taxon>Ascomycota</taxon>
        <taxon>Pezizomycotina</taxon>
        <taxon>Sordariomycetes</taxon>
        <taxon>Sordariomycetidae</taxon>
        <taxon>Sordariales</taxon>
        <taxon>Podosporaceae</taxon>
        <taxon>Podospora</taxon>
        <taxon>Podospora anserina</taxon>
    </lineage>
</organism>
<protein>
    <recommendedName>
        <fullName evidence="4">Gasdermin-like protein het-Q1</fullName>
    </recommendedName>
    <alternativeName>
        <fullName evidence="3">Heterokaryon incompatibility protein Q1</fullName>
    </alternativeName>
    <component>
        <recommendedName>
            <fullName evidence="4">Gasdermin-like protein het-Q1, N-terminal</fullName>
        </recommendedName>
    </component>
</protein>
<gene>
    <name evidence="3" type="primary">het-Q1</name>
    <name evidence="5" type="ORF">PODANS_7_10775</name>
</gene>
<sequence>MPTKTSQHAFAGSERWVVPRYSSKPGTLIRLGSVLTDPEDLESSLNLDSIPPIPPHLLRDATPEVRMSVQTELSKSDSTLAKAAPALEGILTLGGGVEASRSQGVSSSLNISGTVKATVFRADKSYMDVLLKDKNVISYAKRGLGKPMFVVVGVATAGRVEMKETRHVTRKAGVSGKVGVEVIGEGEVGLERERSDKSCNEVRGEGGLDFAYRVREFGYSRVRGTVKDKGDWTGKVLFAGGKGPVVEKGGEVVPVFKEFKEGEVKLRATGSFDVAAKA</sequence>
<keyword id="KW-1003">Cell membrane</keyword>
<keyword id="KW-0472">Membrane</keyword>
<keyword id="KW-1210">Necrosis</keyword>
<keyword id="KW-1185">Reference proteome</keyword>
<keyword id="KW-0812">Transmembrane</keyword>
<keyword id="KW-1134">Transmembrane beta strand</keyword>
<name>HETQ1_PODAN</name>
<dbReference type="EMBL" id="CU633900">
    <property type="protein sequence ID" value="CAP69119.1"/>
    <property type="molecule type" value="Genomic_DNA"/>
</dbReference>
<dbReference type="EMBL" id="FO904942">
    <property type="protein sequence ID" value="CDP32598.1"/>
    <property type="molecule type" value="Genomic_DNA"/>
</dbReference>
<dbReference type="RefSeq" id="XP_001908446.1">
    <property type="nucleotide sequence ID" value="XM_001908411.1"/>
</dbReference>
<dbReference type="GeneID" id="6192626"/>
<dbReference type="KEGG" id="pan:PODANSg5481"/>
<dbReference type="VEuPathDB" id="FungiDB:PODANS_7_10775"/>
<dbReference type="eggNOG" id="ENOG502T8QF">
    <property type="taxonomic scope" value="Eukaryota"/>
</dbReference>
<dbReference type="HOGENOM" id="CLU_1001576_0_0_1"/>
<dbReference type="InParanoid" id="B2AXJ5"/>
<dbReference type="OrthoDB" id="4500473at2759"/>
<dbReference type="Proteomes" id="UP000001197">
    <property type="component" value="Chromosome 7"/>
</dbReference>
<dbReference type="GO" id="GO:0005886">
    <property type="term" value="C:plasma membrane"/>
    <property type="evidence" value="ECO:0007669"/>
    <property type="project" value="UniProtKB-SubCell"/>
</dbReference>
<dbReference type="GO" id="GO:0022829">
    <property type="term" value="F:wide pore channel activity"/>
    <property type="evidence" value="ECO:0000314"/>
    <property type="project" value="UniProtKB"/>
</dbReference>
<dbReference type="GO" id="GO:0012501">
    <property type="term" value="P:programmed cell death"/>
    <property type="evidence" value="ECO:0007669"/>
    <property type="project" value="UniProtKB-KW"/>
</dbReference>
<accession>B2AXJ5</accession>
<comment type="function">
    <molecule>Gasdermin-like protein het-Q1</molecule>
    <text evidence="2">Gasdermin-like protein involved in heterokaryon incompatibility, a process that ensures that during spontaneous vegetative cell fusion, only compatible cells from the same colony survive (non-self-recognition) (PubMed:35135876). In P.anserina, the het-q locus exists as 2 incompatible alleles, het-Q1 (this entry) and het-Q2 (AC P0DW09) (PubMed:35135876). This form constitutes the precursor of the pore-forming protein: during the allorecognition process, it is cleaved by het-Q2, releasing the N-terminal moiety (Gasdermin-like protein het-Q1, N-terminal) that binds to membranes and forms pores, triggering cell death (PubMed:35135876).</text>
</comment>
<comment type="function">
    <molecule>Gasdermin-like protein het-Q1, N-terminal</molecule>
    <text evidence="1 2">Pore-forming protein that causes membrane permeabilization and cell death (PubMed:35135876). Released upon cleavage and maturation by het-Q2 and binds to membrane inner leaflet lipids (PubMed:35135876). Homooligomerizes within the membrane and forms pores of 10-15 nanometers (nm) of inner diameter, triggering cell death (By similarity).</text>
</comment>
<comment type="subunit">
    <molecule>Gasdermin-like protein het-Q1, N-terminal</molecule>
    <text evidence="1">Homooligomer; forms a homooligomeric ring-shaped pore complex when inserted in the membrane.</text>
</comment>
<comment type="subcellular location">
    <molecule>Gasdermin-like protein het-Q1, N-terminal</molecule>
    <subcellularLocation>
        <location evidence="1">Cell membrane</location>
        <topology evidence="1">Multi-pass membrane protein</topology>
    </subcellularLocation>
</comment>
<comment type="PTM">
    <molecule>Gasdermin-like protein het-Q1</molecule>
    <text evidence="2">The precursor form is cleaved by het-Q2, generating the pore-forming protein (Gasdermin-like protein het-Q1, N-terminal).</text>
</comment>
<comment type="similarity">
    <text evidence="4">Belongs to the gasdermin family.</text>
</comment>
<proteinExistence type="evidence at protein level"/>
<evidence type="ECO:0000250" key="1">
    <source>
        <dbReference type="UniProtKB" id="P57764"/>
    </source>
</evidence>
<evidence type="ECO:0000269" key="2">
    <source>
    </source>
</evidence>
<evidence type="ECO:0000303" key="3">
    <source>
    </source>
</evidence>
<evidence type="ECO:0000305" key="4"/>
<evidence type="ECO:0000312" key="5">
    <source>
        <dbReference type="EMBL" id="CAP69119.1"/>
    </source>
</evidence>